<proteinExistence type="inferred from homology"/>
<gene>
    <name evidence="1" type="primary">cysD</name>
    <name type="ordered locus">Avin_12970</name>
</gene>
<comment type="function">
    <text evidence="1">With CysN forms the ATP sulfurylase (ATPS) that catalyzes the adenylation of sulfate producing adenosine 5'-phosphosulfate (APS) and diphosphate, the first enzymatic step in sulfur assimilation pathway. APS synthesis involves the formation of a high-energy phosphoric-sulfuric acid anhydride bond driven by GTP hydrolysis by CysN coupled to ATP hydrolysis by CysD.</text>
</comment>
<comment type="catalytic activity">
    <reaction evidence="1">
        <text>sulfate + ATP + H(+) = adenosine 5'-phosphosulfate + diphosphate</text>
        <dbReference type="Rhea" id="RHEA:18133"/>
        <dbReference type="ChEBI" id="CHEBI:15378"/>
        <dbReference type="ChEBI" id="CHEBI:16189"/>
        <dbReference type="ChEBI" id="CHEBI:30616"/>
        <dbReference type="ChEBI" id="CHEBI:33019"/>
        <dbReference type="ChEBI" id="CHEBI:58243"/>
        <dbReference type="EC" id="2.7.7.4"/>
    </reaction>
</comment>
<comment type="pathway">
    <text evidence="1">Sulfur metabolism; hydrogen sulfide biosynthesis; sulfite from sulfate: step 1/3.</text>
</comment>
<comment type="subunit">
    <text evidence="1">Heterodimer composed of CysD, the smaller subunit, and CysN.</text>
</comment>
<comment type="similarity">
    <text evidence="1">Belongs to the PAPS reductase family. CysD subfamily.</text>
</comment>
<accession>C1DQ71</accession>
<reference key="1">
    <citation type="journal article" date="2009" name="J. Bacteriol.">
        <title>Genome sequence of Azotobacter vinelandii, an obligate aerobe specialized to support diverse anaerobic metabolic processes.</title>
        <authorList>
            <person name="Setubal J.C."/>
            <person name="Dos Santos P."/>
            <person name="Goldman B.S."/>
            <person name="Ertesvaag H."/>
            <person name="Espin G."/>
            <person name="Rubio L.M."/>
            <person name="Valla S."/>
            <person name="Almeida N.F."/>
            <person name="Balasubramanian D."/>
            <person name="Cromes L."/>
            <person name="Curatti L."/>
            <person name="Du Z."/>
            <person name="Godsy E."/>
            <person name="Goodner B."/>
            <person name="Hellner-Burris K."/>
            <person name="Hernandez J.A."/>
            <person name="Houmiel K."/>
            <person name="Imperial J."/>
            <person name="Kennedy C."/>
            <person name="Larson T.J."/>
            <person name="Latreille P."/>
            <person name="Ligon L.S."/>
            <person name="Lu J."/>
            <person name="Maerk M."/>
            <person name="Miller N.M."/>
            <person name="Norton S."/>
            <person name="O'Carroll I.P."/>
            <person name="Paulsen I."/>
            <person name="Raulfs E.C."/>
            <person name="Roemer R."/>
            <person name="Rosser J."/>
            <person name="Segura D."/>
            <person name="Slater S."/>
            <person name="Stricklin S.L."/>
            <person name="Studholme D.J."/>
            <person name="Sun J."/>
            <person name="Viana C.J."/>
            <person name="Wallin E."/>
            <person name="Wang B."/>
            <person name="Wheeler C."/>
            <person name="Zhu H."/>
            <person name="Dean D.R."/>
            <person name="Dixon R."/>
            <person name="Wood D."/>
        </authorList>
    </citation>
    <scope>NUCLEOTIDE SEQUENCE [LARGE SCALE GENOMIC DNA]</scope>
    <source>
        <strain>DJ / ATCC BAA-1303</strain>
    </source>
</reference>
<protein>
    <recommendedName>
        <fullName evidence="1">Sulfate adenylyltransferase subunit 2</fullName>
        <ecNumber evidence="1">2.7.7.4</ecNumber>
    </recommendedName>
    <alternativeName>
        <fullName evidence="1">ATP-sulfurylase small subunit</fullName>
    </alternativeName>
    <alternativeName>
        <fullName evidence="1">Sulfate adenylate transferase</fullName>
        <shortName evidence="1">SAT</shortName>
    </alternativeName>
</protein>
<evidence type="ECO:0000255" key="1">
    <source>
        <dbReference type="HAMAP-Rule" id="MF_00064"/>
    </source>
</evidence>
<name>CYSD_AZOVD</name>
<keyword id="KW-0067">ATP-binding</keyword>
<keyword id="KW-0547">Nucleotide-binding</keyword>
<keyword id="KW-0548">Nucleotidyltransferase</keyword>
<keyword id="KW-0808">Transferase</keyword>
<feature type="chain" id="PRO_1000202399" description="Sulfate adenylyltransferase subunit 2">
    <location>
        <begin position="1"/>
        <end position="305"/>
    </location>
</feature>
<sequence>MADKLTHLKQLEAESIHIIREVAAEFDNPVMLYSIGKDSAVMLHLARKAFFPGKLPFPVMHVDTQWKFQEMYRFRDKMVAEMGLELITHVNPDGVAQGINPFTHGSAKHTDIMKTEGLKQALDKYGFDAAFGGARRDEEKSRAKERVYSFRDSKHRWDPKNQRPELWNVYNGKVKKGESIRVFPLSNWTELDIWQYIYLEQIPIVPLYFAAEREVIEKNGTLIMIDDDRILEHLSAEEKARIQKKMVRFRTLGCYPLTGAVESTAATLPDIIQEMLLTRTSERQGRVIDHDGAGSMEEKKRQGYF</sequence>
<dbReference type="EC" id="2.7.7.4" evidence="1"/>
<dbReference type="EMBL" id="CP001157">
    <property type="protein sequence ID" value="ACO77523.1"/>
    <property type="molecule type" value="Genomic_DNA"/>
</dbReference>
<dbReference type="RefSeq" id="WP_012699943.1">
    <property type="nucleotide sequence ID" value="NC_012560.1"/>
</dbReference>
<dbReference type="SMR" id="C1DQ71"/>
<dbReference type="STRING" id="322710.Avin_12970"/>
<dbReference type="EnsemblBacteria" id="ACO77523">
    <property type="protein sequence ID" value="ACO77523"/>
    <property type="gene ID" value="Avin_12970"/>
</dbReference>
<dbReference type="GeneID" id="88184613"/>
<dbReference type="KEGG" id="avn:Avin_12970"/>
<dbReference type="eggNOG" id="COG0175">
    <property type="taxonomic scope" value="Bacteria"/>
</dbReference>
<dbReference type="HOGENOM" id="CLU_043026_0_0_6"/>
<dbReference type="OrthoDB" id="9772604at2"/>
<dbReference type="UniPathway" id="UPA00140">
    <property type="reaction ID" value="UER00204"/>
</dbReference>
<dbReference type="Proteomes" id="UP000002424">
    <property type="component" value="Chromosome"/>
</dbReference>
<dbReference type="GO" id="GO:0005524">
    <property type="term" value="F:ATP binding"/>
    <property type="evidence" value="ECO:0007669"/>
    <property type="project" value="UniProtKB-KW"/>
</dbReference>
<dbReference type="GO" id="GO:0004781">
    <property type="term" value="F:sulfate adenylyltransferase (ATP) activity"/>
    <property type="evidence" value="ECO:0007669"/>
    <property type="project" value="UniProtKB-UniRule"/>
</dbReference>
<dbReference type="GO" id="GO:0070814">
    <property type="term" value="P:hydrogen sulfide biosynthetic process"/>
    <property type="evidence" value="ECO:0007669"/>
    <property type="project" value="UniProtKB-UniRule"/>
</dbReference>
<dbReference type="GO" id="GO:0000103">
    <property type="term" value="P:sulfate assimilation"/>
    <property type="evidence" value="ECO:0007669"/>
    <property type="project" value="UniProtKB-UniRule"/>
</dbReference>
<dbReference type="CDD" id="cd23946">
    <property type="entry name" value="Sulfate_adenylyltransferase_2"/>
    <property type="match status" value="1"/>
</dbReference>
<dbReference type="FunFam" id="3.40.50.620:FF:000002">
    <property type="entry name" value="Sulfate adenylyltransferase subunit 2"/>
    <property type="match status" value="1"/>
</dbReference>
<dbReference type="Gene3D" id="3.40.50.620">
    <property type="entry name" value="HUPs"/>
    <property type="match status" value="1"/>
</dbReference>
<dbReference type="HAMAP" id="MF_00064">
    <property type="entry name" value="Sulf_adenylyltr_sub2"/>
    <property type="match status" value="1"/>
</dbReference>
<dbReference type="InterPro" id="IPR002500">
    <property type="entry name" value="PAPS_reduct_dom"/>
</dbReference>
<dbReference type="InterPro" id="IPR014729">
    <property type="entry name" value="Rossmann-like_a/b/a_fold"/>
</dbReference>
<dbReference type="InterPro" id="IPR011784">
    <property type="entry name" value="SO4_adenylTrfase_ssu"/>
</dbReference>
<dbReference type="InterPro" id="IPR050128">
    <property type="entry name" value="Sulfate_adenylyltrnsfr_sub2"/>
</dbReference>
<dbReference type="NCBIfam" id="TIGR02039">
    <property type="entry name" value="CysD"/>
    <property type="match status" value="1"/>
</dbReference>
<dbReference type="NCBIfam" id="NF003587">
    <property type="entry name" value="PRK05253.1"/>
    <property type="match status" value="1"/>
</dbReference>
<dbReference type="NCBIfam" id="NF009214">
    <property type="entry name" value="PRK12563.1"/>
    <property type="match status" value="1"/>
</dbReference>
<dbReference type="PANTHER" id="PTHR43196">
    <property type="entry name" value="SULFATE ADENYLYLTRANSFERASE SUBUNIT 2"/>
    <property type="match status" value="1"/>
</dbReference>
<dbReference type="PANTHER" id="PTHR43196:SF1">
    <property type="entry name" value="SULFATE ADENYLYLTRANSFERASE SUBUNIT 2"/>
    <property type="match status" value="1"/>
</dbReference>
<dbReference type="Pfam" id="PF01507">
    <property type="entry name" value="PAPS_reduct"/>
    <property type="match status" value="1"/>
</dbReference>
<dbReference type="PIRSF" id="PIRSF002936">
    <property type="entry name" value="CysDAde_trans"/>
    <property type="match status" value="1"/>
</dbReference>
<dbReference type="SUPFAM" id="SSF52402">
    <property type="entry name" value="Adenine nucleotide alpha hydrolases-like"/>
    <property type="match status" value="1"/>
</dbReference>
<organism>
    <name type="scientific">Azotobacter vinelandii (strain DJ / ATCC BAA-1303)</name>
    <dbReference type="NCBI Taxonomy" id="322710"/>
    <lineage>
        <taxon>Bacteria</taxon>
        <taxon>Pseudomonadati</taxon>
        <taxon>Pseudomonadota</taxon>
        <taxon>Gammaproteobacteria</taxon>
        <taxon>Pseudomonadales</taxon>
        <taxon>Pseudomonadaceae</taxon>
        <taxon>Azotobacter</taxon>
    </lineage>
</organism>